<organism>
    <name type="scientific">Treponema pallidum (strain Nichols)</name>
    <dbReference type="NCBI Taxonomy" id="243276"/>
    <lineage>
        <taxon>Bacteria</taxon>
        <taxon>Pseudomonadati</taxon>
        <taxon>Spirochaetota</taxon>
        <taxon>Spirochaetia</taxon>
        <taxon>Spirochaetales</taxon>
        <taxon>Treponemataceae</taxon>
        <taxon>Treponema</taxon>
    </lineage>
</organism>
<gene>
    <name evidence="1" type="primary">gpsA</name>
    <name type="ordered locus">TP_1009</name>
</gene>
<keyword id="KW-0963">Cytoplasm</keyword>
<keyword id="KW-0444">Lipid biosynthesis</keyword>
<keyword id="KW-0443">Lipid metabolism</keyword>
<keyword id="KW-0520">NAD</keyword>
<keyword id="KW-0521">NADP</keyword>
<keyword id="KW-0547">Nucleotide-binding</keyword>
<keyword id="KW-0560">Oxidoreductase</keyword>
<keyword id="KW-0594">Phospholipid biosynthesis</keyword>
<keyword id="KW-1208">Phospholipid metabolism</keyword>
<keyword id="KW-1185">Reference proteome</keyword>
<name>GPDA_TREPA</name>
<dbReference type="EC" id="1.1.1.94" evidence="1"/>
<dbReference type="EMBL" id="AE000520">
    <property type="protein sequence ID" value="AAC65960.1"/>
    <property type="molecule type" value="Genomic_DNA"/>
</dbReference>
<dbReference type="PIR" id="E71252">
    <property type="entry name" value="E71252"/>
</dbReference>
<dbReference type="RefSeq" id="WP_010882453.1">
    <property type="nucleotide sequence ID" value="NC_021490.2"/>
</dbReference>
<dbReference type="SMR" id="O83973"/>
<dbReference type="IntAct" id="O83973">
    <property type="interactions" value="1"/>
</dbReference>
<dbReference type="STRING" id="243276.TP_1009"/>
<dbReference type="EnsemblBacteria" id="AAC65960">
    <property type="protein sequence ID" value="AAC65960"/>
    <property type="gene ID" value="TP_1009"/>
</dbReference>
<dbReference type="KEGG" id="tpa:TP_1009"/>
<dbReference type="KEGG" id="tpw:TPANIC_1009"/>
<dbReference type="eggNOG" id="COG0240">
    <property type="taxonomic scope" value="Bacteria"/>
</dbReference>
<dbReference type="HOGENOM" id="CLU_033449_0_0_12"/>
<dbReference type="OrthoDB" id="9812273at2"/>
<dbReference type="UniPathway" id="UPA00940"/>
<dbReference type="Proteomes" id="UP000000811">
    <property type="component" value="Chromosome"/>
</dbReference>
<dbReference type="GO" id="GO:0005829">
    <property type="term" value="C:cytosol"/>
    <property type="evidence" value="ECO:0007669"/>
    <property type="project" value="TreeGrafter"/>
</dbReference>
<dbReference type="GO" id="GO:0047952">
    <property type="term" value="F:glycerol-3-phosphate dehydrogenase [NAD(P)+] activity"/>
    <property type="evidence" value="ECO:0007669"/>
    <property type="project" value="UniProtKB-UniRule"/>
</dbReference>
<dbReference type="GO" id="GO:0051287">
    <property type="term" value="F:NAD binding"/>
    <property type="evidence" value="ECO:0007669"/>
    <property type="project" value="InterPro"/>
</dbReference>
<dbReference type="GO" id="GO:0005975">
    <property type="term" value="P:carbohydrate metabolic process"/>
    <property type="evidence" value="ECO:0007669"/>
    <property type="project" value="InterPro"/>
</dbReference>
<dbReference type="GO" id="GO:0046167">
    <property type="term" value="P:glycerol-3-phosphate biosynthetic process"/>
    <property type="evidence" value="ECO:0007669"/>
    <property type="project" value="UniProtKB-UniRule"/>
</dbReference>
<dbReference type="GO" id="GO:0046168">
    <property type="term" value="P:glycerol-3-phosphate catabolic process"/>
    <property type="evidence" value="ECO:0007669"/>
    <property type="project" value="InterPro"/>
</dbReference>
<dbReference type="GO" id="GO:0006650">
    <property type="term" value="P:glycerophospholipid metabolic process"/>
    <property type="evidence" value="ECO:0007669"/>
    <property type="project" value="UniProtKB-UniRule"/>
</dbReference>
<dbReference type="GO" id="GO:0008654">
    <property type="term" value="P:phospholipid biosynthetic process"/>
    <property type="evidence" value="ECO:0007669"/>
    <property type="project" value="UniProtKB-KW"/>
</dbReference>
<dbReference type="Gene3D" id="1.10.1040.10">
    <property type="entry name" value="N-(1-d-carboxylethyl)-l-norvaline Dehydrogenase, domain 2"/>
    <property type="match status" value="1"/>
</dbReference>
<dbReference type="Gene3D" id="3.40.50.720">
    <property type="entry name" value="NAD(P)-binding Rossmann-like Domain"/>
    <property type="match status" value="1"/>
</dbReference>
<dbReference type="HAMAP" id="MF_00394">
    <property type="entry name" value="NAD_Glyc3P_dehydrog"/>
    <property type="match status" value="1"/>
</dbReference>
<dbReference type="InterPro" id="IPR008927">
    <property type="entry name" value="6-PGluconate_DH-like_C_sf"/>
</dbReference>
<dbReference type="InterPro" id="IPR013328">
    <property type="entry name" value="6PGD_dom2"/>
</dbReference>
<dbReference type="InterPro" id="IPR006168">
    <property type="entry name" value="G3P_DH_NAD-dep"/>
</dbReference>
<dbReference type="InterPro" id="IPR006109">
    <property type="entry name" value="G3P_DH_NAD-dep_C"/>
</dbReference>
<dbReference type="InterPro" id="IPR011128">
    <property type="entry name" value="G3P_DH_NAD-dep_N"/>
</dbReference>
<dbReference type="InterPro" id="IPR036291">
    <property type="entry name" value="NAD(P)-bd_dom_sf"/>
</dbReference>
<dbReference type="NCBIfam" id="NF000940">
    <property type="entry name" value="PRK00094.1-2"/>
    <property type="match status" value="1"/>
</dbReference>
<dbReference type="NCBIfam" id="NF000942">
    <property type="entry name" value="PRK00094.1-4"/>
    <property type="match status" value="1"/>
</dbReference>
<dbReference type="PANTHER" id="PTHR11728">
    <property type="entry name" value="GLYCEROL-3-PHOSPHATE DEHYDROGENASE"/>
    <property type="match status" value="1"/>
</dbReference>
<dbReference type="PANTHER" id="PTHR11728:SF1">
    <property type="entry name" value="GLYCEROL-3-PHOSPHATE DEHYDROGENASE [NAD(+)] 2, CHLOROPLASTIC"/>
    <property type="match status" value="1"/>
</dbReference>
<dbReference type="Pfam" id="PF07479">
    <property type="entry name" value="NAD_Gly3P_dh_C"/>
    <property type="match status" value="1"/>
</dbReference>
<dbReference type="Pfam" id="PF01210">
    <property type="entry name" value="NAD_Gly3P_dh_N"/>
    <property type="match status" value="1"/>
</dbReference>
<dbReference type="PIRSF" id="PIRSF000114">
    <property type="entry name" value="Glycerol-3-P_dh"/>
    <property type="match status" value="1"/>
</dbReference>
<dbReference type="PRINTS" id="PR00077">
    <property type="entry name" value="GPDHDRGNASE"/>
</dbReference>
<dbReference type="SUPFAM" id="SSF48179">
    <property type="entry name" value="6-phosphogluconate dehydrogenase C-terminal domain-like"/>
    <property type="match status" value="1"/>
</dbReference>
<dbReference type="SUPFAM" id="SSF51735">
    <property type="entry name" value="NAD(P)-binding Rossmann-fold domains"/>
    <property type="match status" value="1"/>
</dbReference>
<dbReference type="PROSITE" id="PS00957">
    <property type="entry name" value="NAD_G3PDH"/>
    <property type="match status" value="1"/>
</dbReference>
<comment type="function">
    <text evidence="1">Catalyzes the reduction of the glycolytic intermediate dihydroxyacetone phosphate (DHAP) to sn-glycerol 3-phosphate (G3P), the key precursor for phospholipid synthesis.</text>
</comment>
<comment type="catalytic activity">
    <reaction evidence="1">
        <text>sn-glycerol 3-phosphate + NAD(+) = dihydroxyacetone phosphate + NADH + H(+)</text>
        <dbReference type="Rhea" id="RHEA:11092"/>
        <dbReference type="ChEBI" id="CHEBI:15378"/>
        <dbReference type="ChEBI" id="CHEBI:57540"/>
        <dbReference type="ChEBI" id="CHEBI:57597"/>
        <dbReference type="ChEBI" id="CHEBI:57642"/>
        <dbReference type="ChEBI" id="CHEBI:57945"/>
        <dbReference type="EC" id="1.1.1.94"/>
    </reaction>
    <physiologicalReaction direction="right-to-left" evidence="1">
        <dbReference type="Rhea" id="RHEA:11094"/>
    </physiologicalReaction>
</comment>
<comment type="catalytic activity">
    <reaction evidence="1">
        <text>sn-glycerol 3-phosphate + NADP(+) = dihydroxyacetone phosphate + NADPH + H(+)</text>
        <dbReference type="Rhea" id="RHEA:11096"/>
        <dbReference type="ChEBI" id="CHEBI:15378"/>
        <dbReference type="ChEBI" id="CHEBI:57597"/>
        <dbReference type="ChEBI" id="CHEBI:57642"/>
        <dbReference type="ChEBI" id="CHEBI:57783"/>
        <dbReference type="ChEBI" id="CHEBI:58349"/>
        <dbReference type="EC" id="1.1.1.94"/>
    </reaction>
    <physiologicalReaction direction="right-to-left" evidence="1">
        <dbReference type="Rhea" id="RHEA:11098"/>
    </physiologicalReaction>
</comment>
<comment type="pathway">
    <text evidence="1">Membrane lipid metabolism; glycerophospholipid metabolism.</text>
</comment>
<comment type="subcellular location">
    <subcellularLocation>
        <location evidence="1">Cytoplasm</location>
    </subcellularLocation>
</comment>
<comment type="similarity">
    <text evidence="1">Belongs to the NAD-dependent glycerol-3-phosphate dehydrogenase family.</text>
</comment>
<protein>
    <recommendedName>
        <fullName evidence="1">Glycerol-3-phosphate dehydrogenase [NAD(P)+]</fullName>
        <ecNumber evidence="1">1.1.1.94</ecNumber>
    </recommendedName>
    <alternativeName>
        <fullName evidence="1">NAD(P)(+)-dependent glycerol-3-phosphate dehydrogenase</fullName>
    </alternativeName>
    <alternativeName>
        <fullName evidence="1">NAD(P)H-dependent dihydroxyacetone-phosphate reductase</fullName>
    </alternativeName>
</protein>
<proteinExistence type="inferred from homology"/>
<accession>O83973</accession>
<sequence length="356" mass="37879">MASIAILGGGAWGTALAASLTVNGHTVMLWARRRQTCDAINARNENVQYLPGITLPAALCASPDMAYVCAGADLIVLAVPSCYLAEVAALMNTTPRFQRLRTAAVGQEYPLIGILTKGFIPDQEGMPHLITDALGALLPSGAHGQLVYISGPSHAQEVAQGKVTGLIAASQNPMAAIRVRELLRSKRVQVYSSLDVVGVQVCAAVKNVIAIAFGLLDAMAEHSEAFGDNTESMLLAAGLNEIQTIGKQLGSTHPETFTSLAGIGDLDVTCRSAYGRNRRFGRDIVHKGILDSFSGIQDLVSRLPEVGYLAEGVVACMHVQRLAERDRLKVPICAGLYAILNREKGADTFMQEILGW</sequence>
<feature type="chain" id="PRO_0000138051" description="Glycerol-3-phosphate dehydrogenase [NAD(P)+]">
    <location>
        <begin position="1"/>
        <end position="356"/>
    </location>
</feature>
<feature type="active site" description="Proton acceptor" evidence="1">
    <location>
        <position position="206"/>
    </location>
</feature>
<feature type="binding site" evidence="1">
    <location>
        <position position="12"/>
    </location>
    <ligand>
        <name>NADPH</name>
        <dbReference type="ChEBI" id="CHEBI:57783"/>
    </ligand>
</feature>
<feature type="binding site" evidence="1">
    <location>
        <position position="32"/>
    </location>
    <ligand>
        <name>NADPH</name>
        <dbReference type="ChEBI" id="CHEBI:57783"/>
    </ligand>
</feature>
<feature type="binding site" evidence="1">
    <location>
        <position position="33"/>
    </location>
    <ligand>
        <name>NADPH</name>
        <dbReference type="ChEBI" id="CHEBI:57783"/>
    </ligand>
</feature>
<feature type="binding site" evidence="1">
    <location>
        <position position="117"/>
    </location>
    <ligand>
        <name>NADPH</name>
        <dbReference type="ChEBI" id="CHEBI:57783"/>
    </ligand>
</feature>
<feature type="binding site" evidence="1">
    <location>
        <position position="117"/>
    </location>
    <ligand>
        <name>sn-glycerol 3-phosphate</name>
        <dbReference type="ChEBI" id="CHEBI:57597"/>
    </ligand>
</feature>
<feature type="binding site" evidence="1">
    <location>
        <position position="151"/>
    </location>
    <ligand>
        <name>sn-glycerol 3-phosphate</name>
        <dbReference type="ChEBI" id="CHEBI:57597"/>
    </ligand>
</feature>
<feature type="binding site" evidence="1">
    <location>
        <position position="153"/>
    </location>
    <ligand>
        <name>sn-glycerol 3-phosphate</name>
        <dbReference type="ChEBI" id="CHEBI:57597"/>
    </ligand>
</feature>
<feature type="binding site" evidence="1">
    <location>
        <position position="155"/>
    </location>
    <ligand>
        <name>NADPH</name>
        <dbReference type="ChEBI" id="CHEBI:57783"/>
    </ligand>
</feature>
<feature type="binding site" evidence="1">
    <location>
        <position position="206"/>
    </location>
    <ligand>
        <name>sn-glycerol 3-phosphate</name>
        <dbReference type="ChEBI" id="CHEBI:57597"/>
    </ligand>
</feature>
<feature type="binding site" evidence="1">
    <location>
        <position position="265"/>
    </location>
    <ligand>
        <name>sn-glycerol 3-phosphate</name>
        <dbReference type="ChEBI" id="CHEBI:57597"/>
    </ligand>
</feature>
<feature type="binding site" evidence="1">
    <location>
        <position position="276"/>
    </location>
    <ligand>
        <name>NADPH</name>
        <dbReference type="ChEBI" id="CHEBI:57783"/>
    </ligand>
</feature>
<feature type="binding site" evidence="1">
    <location>
        <position position="276"/>
    </location>
    <ligand>
        <name>sn-glycerol 3-phosphate</name>
        <dbReference type="ChEBI" id="CHEBI:57597"/>
    </ligand>
</feature>
<feature type="binding site" evidence="1">
    <location>
        <position position="277"/>
    </location>
    <ligand>
        <name>sn-glycerol 3-phosphate</name>
        <dbReference type="ChEBI" id="CHEBI:57597"/>
    </ligand>
</feature>
<feature type="binding site" evidence="1">
    <location>
        <position position="309"/>
    </location>
    <ligand>
        <name>NADPH</name>
        <dbReference type="ChEBI" id="CHEBI:57783"/>
    </ligand>
</feature>
<feature type="binding site" evidence="1">
    <location>
        <position position="311"/>
    </location>
    <ligand>
        <name>NADPH</name>
        <dbReference type="ChEBI" id="CHEBI:57783"/>
    </ligand>
</feature>
<reference key="1">
    <citation type="journal article" date="1998" name="Science">
        <title>Complete genome sequence of Treponema pallidum, the syphilis spirochete.</title>
        <authorList>
            <person name="Fraser C.M."/>
            <person name="Norris S.J."/>
            <person name="Weinstock G.M."/>
            <person name="White O."/>
            <person name="Sutton G.G."/>
            <person name="Dodson R.J."/>
            <person name="Gwinn M.L."/>
            <person name="Hickey E.K."/>
            <person name="Clayton R.A."/>
            <person name="Ketchum K.A."/>
            <person name="Sodergren E."/>
            <person name="Hardham J.M."/>
            <person name="McLeod M.P."/>
            <person name="Salzberg S.L."/>
            <person name="Peterson J.D."/>
            <person name="Khalak H.G."/>
            <person name="Richardson D.L."/>
            <person name="Howell J.K."/>
            <person name="Chidambaram M."/>
            <person name="Utterback T.R."/>
            <person name="McDonald L.A."/>
            <person name="Artiach P."/>
            <person name="Bowman C."/>
            <person name="Cotton M.D."/>
            <person name="Fujii C."/>
            <person name="Garland S.A."/>
            <person name="Hatch B."/>
            <person name="Horst K."/>
            <person name="Roberts K.M."/>
            <person name="Sandusky M."/>
            <person name="Weidman J.F."/>
            <person name="Smith H.O."/>
            <person name="Venter J.C."/>
        </authorList>
    </citation>
    <scope>NUCLEOTIDE SEQUENCE [LARGE SCALE GENOMIC DNA]</scope>
    <source>
        <strain>Nichols</strain>
    </source>
</reference>
<evidence type="ECO:0000255" key="1">
    <source>
        <dbReference type="HAMAP-Rule" id="MF_00394"/>
    </source>
</evidence>